<keyword id="KW-0687">Ribonucleoprotein</keyword>
<keyword id="KW-0689">Ribosomal protein</keyword>
<gene>
    <name evidence="1" type="primary">rpmD</name>
    <name type="ordered locus">Maqu_0737</name>
</gene>
<comment type="subunit">
    <text evidence="1">Part of the 50S ribosomal subunit.</text>
</comment>
<comment type="similarity">
    <text evidence="1">Belongs to the universal ribosomal protein uL30 family.</text>
</comment>
<reference key="1">
    <citation type="journal article" date="2011" name="Appl. Environ. Microbiol.">
        <title>Genomic potential of Marinobacter aquaeolei, a biogeochemical 'opportunitroph'.</title>
        <authorList>
            <person name="Singer E."/>
            <person name="Webb E.A."/>
            <person name="Nelson W.C."/>
            <person name="Heidelberg J.F."/>
            <person name="Ivanova N."/>
            <person name="Pati A."/>
            <person name="Edwards K.J."/>
        </authorList>
    </citation>
    <scope>NUCLEOTIDE SEQUENCE [LARGE SCALE GENOMIC DNA]</scope>
    <source>
        <strain>ATCC 700491 / DSM 11845 / VT8</strain>
    </source>
</reference>
<evidence type="ECO:0000255" key="1">
    <source>
        <dbReference type="HAMAP-Rule" id="MF_01371"/>
    </source>
</evidence>
<evidence type="ECO:0000305" key="2"/>
<feature type="chain" id="PRO_0000347113" description="Large ribosomal subunit protein uL30">
    <location>
        <begin position="1"/>
        <end position="62"/>
    </location>
</feature>
<accession>A1TYL5</accession>
<dbReference type="EMBL" id="CP000514">
    <property type="protein sequence ID" value="ABM17834.1"/>
    <property type="molecule type" value="Genomic_DNA"/>
</dbReference>
<dbReference type="RefSeq" id="WP_008174894.1">
    <property type="nucleotide sequence ID" value="NC_008740.1"/>
</dbReference>
<dbReference type="SMR" id="A1TYL5"/>
<dbReference type="STRING" id="351348.Maqu_0737"/>
<dbReference type="GeneID" id="31820112"/>
<dbReference type="KEGG" id="maq:Maqu_0737"/>
<dbReference type="eggNOG" id="COG1841">
    <property type="taxonomic scope" value="Bacteria"/>
</dbReference>
<dbReference type="HOGENOM" id="CLU_131047_1_4_6"/>
<dbReference type="OrthoDB" id="9812790at2"/>
<dbReference type="Proteomes" id="UP000000998">
    <property type="component" value="Chromosome"/>
</dbReference>
<dbReference type="GO" id="GO:0022625">
    <property type="term" value="C:cytosolic large ribosomal subunit"/>
    <property type="evidence" value="ECO:0007669"/>
    <property type="project" value="TreeGrafter"/>
</dbReference>
<dbReference type="GO" id="GO:0003735">
    <property type="term" value="F:structural constituent of ribosome"/>
    <property type="evidence" value="ECO:0007669"/>
    <property type="project" value="InterPro"/>
</dbReference>
<dbReference type="GO" id="GO:0006412">
    <property type="term" value="P:translation"/>
    <property type="evidence" value="ECO:0007669"/>
    <property type="project" value="UniProtKB-UniRule"/>
</dbReference>
<dbReference type="CDD" id="cd01658">
    <property type="entry name" value="Ribosomal_L30"/>
    <property type="match status" value="1"/>
</dbReference>
<dbReference type="FunFam" id="3.30.1390.20:FF:000001">
    <property type="entry name" value="50S ribosomal protein L30"/>
    <property type="match status" value="1"/>
</dbReference>
<dbReference type="Gene3D" id="3.30.1390.20">
    <property type="entry name" value="Ribosomal protein L30, ferredoxin-like fold domain"/>
    <property type="match status" value="1"/>
</dbReference>
<dbReference type="HAMAP" id="MF_01371_B">
    <property type="entry name" value="Ribosomal_uL30_B"/>
    <property type="match status" value="1"/>
</dbReference>
<dbReference type="InterPro" id="IPR036919">
    <property type="entry name" value="Ribo_uL30_ferredoxin-like_sf"/>
</dbReference>
<dbReference type="InterPro" id="IPR005996">
    <property type="entry name" value="Ribosomal_uL30_bac-type"/>
</dbReference>
<dbReference type="InterPro" id="IPR016082">
    <property type="entry name" value="Ribosomal_uL30_ferredoxin-like"/>
</dbReference>
<dbReference type="NCBIfam" id="TIGR01308">
    <property type="entry name" value="rpmD_bact"/>
    <property type="match status" value="1"/>
</dbReference>
<dbReference type="PANTHER" id="PTHR15892:SF2">
    <property type="entry name" value="LARGE RIBOSOMAL SUBUNIT PROTEIN UL30M"/>
    <property type="match status" value="1"/>
</dbReference>
<dbReference type="PANTHER" id="PTHR15892">
    <property type="entry name" value="MITOCHONDRIAL RIBOSOMAL PROTEIN L30"/>
    <property type="match status" value="1"/>
</dbReference>
<dbReference type="Pfam" id="PF00327">
    <property type="entry name" value="Ribosomal_L30"/>
    <property type="match status" value="1"/>
</dbReference>
<dbReference type="PIRSF" id="PIRSF002211">
    <property type="entry name" value="Ribosomal_L30_bac-type"/>
    <property type="match status" value="1"/>
</dbReference>
<dbReference type="SUPFAM" id="SSF55129">
    <property type="entry name" value="Ribosomal protein L30p/L7e"/>
    <property type="match status" value="1"/>
</dbReference>
<proteinExistence type="inferred from homology"/>
<organism>
    <name type="scientific">Marinobacter nauticus (strain ATCC 700491 / DSM 11845 / VT8)</name>
    <name type="common">Marinobacter aquaeolei</name>
    <dbReference type="NCBI Taxonomy" id="351348"/>
    <lineage>
        <taxon>Bacteria</taxon>
        <taxon>Pseudomonadati</taxon>
        <taxon>Pseudomonadota</taxon>
        <taxon>Gammaproteobacteria</taxon>
        <taxon>Pseudomonadales</taxon>
        <taxon>Marinobacteraceae</taxon>
        <taxon>Marinobacter</taxon>
    </lineage>
</organism>
<protein>
    <recommendedName>
        <fullName evidence="1">Large ribosomal subunit protein uL30</fullName>
    </recommendedName>
    <alternativeName>
        <fullName evidence="2">50S ribosomal protein L30</fullName>
    </alternativeName>
</protein>
<name>RL30_MARN8</name>
<sequence>MANAKTIKVTLTRSPIGCQPKHKLCVKGLGLRKIGHTVEVEDTPSIRGMINRVNYLVRVEEN</sequence>